<evidence type="ECO:0000250" key="1"/>
<evidence type="ECO:0000255" key="2"/>
<evidence type="ECO:0000256" key="3">
    <source>
        <dbReference type="SAM" id="MobiDB-lite"/>
    </source>
</evidence>
<evidence type="ECO:0000305" key="4"/>
<comment type="function">
    <text evidence="1">Probable mitochondrial mRNA stabilization factor.</text>
</comment>
<comment type="subcellular location">
    <subcellularLocation>
        <location evidence="1">Mitochondrion inner membrane</location>
        <topology evidence="1">Peripheral membrane protein</topology>
        <orientation evidence="1">Matrix side</orientation>
    </subcellularLocation>
</comment>
<comment type="similarity">
    <text evidence="4">Belongs to the ATP25 family.</text>
</comment>
<name>ATP25_AJEDR</name>
<reference key="1">
    <citation type="journal article" date="2015" name="PLoS Genet.">
        <title>The dynamic genome and transcriptome of the human fungal pathogen Blastomyces and close relative Emmonsia.</title>
        <authorList>
            <person name="Munoz J.F."/>
            <person name="Gauthier G.M."/>
            <person name="Desjardins C.A."/>
            <person name="Gallo J.E."/>
            <person name="Holder J."/>
            <person name="Sullivan T.D."/>
            <person name="Marty A.J."/>
            <person name="Carmen J.C."/>
            <person name="Chen Z."/>
            <person name="Ding L."/>
            <person name="Gujja S."/>
            <person name="Magrini V."/>
            <person name="Misas E."/>
            <person name="Mitreva M."/>
            <person name="Priest M."/>
            <person name="Saif S."/>
            <person name="Whiston E.A."/>
            <person name="Young S."/>
            <person name="Zeng Q."/>
            <person name="Goldman W.E."/>
            <person name="Mardis E.R."/>
            <person name="Taylor J.W."/>
            <person name="McEwen J.G."/>
            <person name="Clay O.K."/>
            <person name="Klein B.S."/>
            <person name="Cuomo C.A."/>
        </authorList>
    </citation>
    <scope>NUCLEOTIDE SEQUENCE [LARGE SCALE GENOMIC DNA]</scope>
    <source>
        <strain>ER-3 / ATCC MYA-2586</strain>
    </source>
</reference>
<gene>
    <name type="primary">ATP25</name>
    <name type="ORF">BDCG_01222</name>
</gene>
<feature type="transit peptide" description="Mitochondrion" evidence="2">
    <location>
        <begin position="1"/>
        <end position="52"/>
    </location>
</feature>
<feature type="chain" id="PRO_0000404456" description="ATPase synthesis protein 25, mitochondrial">
    <location>
        <begin position="53"/>
        <end position="724"/>
    </location>
</feature>
<feature type="region of interest" description="Disordered" evidence="3">
    <location>
        <begin position="36"/>
        <end position="76"/>
    </location>
</feature>
<feature type="region of interest" description="Disordered" evidence="3">
    <location>
        <begin position="300"/>
        <end position="323"/>
    </location>
</feature>
<feature type="compositionally biased region" description="Low complexity" evidence="3">
    <location>
        <begin position="308"/>
        <end position="319"/>
    </location>
</feature>
<dbReference type="EMBL" id="EQ999973">
    <property type="protein sequence ID" value="EEQ84417.1"/>
    <property type="molecule type" value="Genomic_DNA"/>
</dbReference>
<dbReference type="SMR" id="C5GAC6"/>
<dbReference type="STRING" id="559297.C5GAC6"/>
<dbReference type="VEuPathDB" id="FungiDB:BDCG_01222"/>
<dbReference type="eggNOG" id="ENOG502RGZN">
    <property type="taxonomic scope" value="Eukaryota"/>
</dbReference>
<dbReference type="HOGENOM" id="CLU_016140_0_0_1"/>
<dbReference type="OMA" id="CLSSWVP"/>
<dbReference type="GO" id="GO:0005743">
    <property type="term" value="C:mitochondrial inner membrane"/>
    <property type="evidence" value="ECO:0007669"/>
    <property type="project" value="UniProtKB-SubCell"/>
</dbReference>
<dbReference type="GO" id="GO:0140053">
    <property type="term" value="P:mitochondrial gene expression"/>
    <property type="evidence" value="ECO:0007669"/>
    <property type="project" value="InterPro"/>
</dbReference>
<dbReference type="GO" id="GO:0048255">
    <property type="term" value="P:mRNA stabilization"/>
    <property type="evidence" value="ECO:0007669"/>
    <property type="project" value="TreeGrafter"/>
</dbReference>
<dbReference type="FunFam" id="3.30.460.10:FF:000044">
    <property type="entry name" value="ATPase synthesis protein 25, mitochondrial"/>
    <property type="match status" value="1"/>
</dbReference>
<dbReference type="Gene3D" id="3.30.460.10">
    <property type="entry name" value="Beta Polymerase, domain 2"/>
    <property type="match status" value="1"/>
</dbReference>
<dbReference type="InterPro" id="IPR040152">
    <property type="entry name" value="Atp25"/>
</dbReference>
<dbReference type="InterPro" id="IPR043519">
    <property type="entry name" value="NT_sf"/>
</dbReference>
<dbReference type="PANTHER" id="PTHR28087">
    <property type="entry name" value="ATPASE SYNTHESIS PROTEIN 25, MITOCHONDRIAL"/>
    <property type="match status" value="1"/>
</dbReference>
<dbReference type="PANTHER" id="PTHR28087:SF1">
    <property type="entry name" value="ATPASE SYNTHESIS PROTEIN 25, MITOCHONDRIAL"/>
    <property type="match status" value="1"/>
</dbReference>
<protein>
    <recommendedName>
        <fullName>ATPase synthesis protein 25, mitochondrial</fullName>
    </recommendedName>
</protein>
<proteinExistence type="inferred from homology"/>
<sequence>MRRALLTGIQCHACRNNVVRSFVSVSGVTFMPLASGSWSASQTRPPPLSRNFSSQHAKLFSSHPSDNAEVAVDPMPEKDITEETVKPPEEPEEHIPWYLQEELEATTSHPLRKQQPLPPLPENPPPILNGLLEHISIDLGLDDISLLDLRKLDPPPALGANLIMIFGTARGVKHLNVSADRLCRWLRTTYKLRPDADGLLGRNELKIKLRRKARRAKLAKSAKSTLTAPDDGITTGWICVDVGTVEGGQFRKPEEEARKVGFVGFGTFVQGTRIVVQLMTEEKREEVDLEGLWRRTLERNSLENEGLPQPQAEEPPQEAGDIHKPSSVTPAHISHRVSHAAQISVNYEQRRGISTGSCQYRDLEEDGLNYAPINPDGTIKLPELISESTPLTSLTSRLRNISPYEAIYHLGQDVNDTNSTTFLEQFYRKLSKAPDDLASAQRIKLICIAIMLHHPGYGKTDLFKVTQEHFISNYGVTPPQFLEILDALLSFKPDLTSDPPNLLLPAADMELALQTIDHVGLRGIDLLNSTVWMKLFVGASFRVPVCPVRDLMNAPVIGNRTPVSLDTYETVNRVQTRLLKVKTAAKIELSANEYLSLLRVLFDHEWYSMFWDTWEEIALAGMPRDKSLYVFLFQLHAESDGWEGWKSTLLNCIPMMERENPPVYMDRELAEVIARCLAIAHPEIMDRVERNEPSPLVRLWHRCRITIEKEVPLRGAQNPPSTMS</sequence>
<keyword id="KW-0472">Membrane</keyword>
<keyword id="KW-0496">Mitochondrion</keyword>
<keyword id="KW-0999">Mitochondrion inner membrane</keyword>
<keyword id="KW-0809">Transit peptide</keyword>
<organism>
    <name type="scientific">Ajellomyces dermatitidis (strain ER-3 / ATCC MYA-2586)</name>
    <name type="common">Blastomyces dermatitidis</name>
    <dbReference type="NCBI Taxonomy" id="559297"/>
    <lineage>
        <taxon>Eukaryota</taxon>
        <taxon>Fungi</taxon>
        <taxon>Dikarya</taxon>
        <taxon>Ascomycota</taxon>
        <taxon>Pezizomycotina</taxon>
        <taxon>Eurotiomycetes</taxon>
        <taxon>Eurotiomycetidae</taxon>
        <taxon>Onygenales</taxon>
        <taxon>Ajellomycetaceae</taxon>
        <taxon>Blastomyces</taxon>
    </lineage>
</organism>
<accession>C5GAC6</accession>